<comment type="function">
    <text evidence="1">Catalyzes the hydrolytic cleavage of the carbon-nitrogen bond in imidazolone-5-propanoate to yield N-formimidoyl-L-glutamate. It is the third step in the universal histidine degradation pathway.</text>
</comment>
<comment type="catalytic activity">
    <reaction evidence="1">
        <text>4-imidazolone-5-propanoate + H2O = N-formimidoyl-L-glutamate</text>
        <dbReference type="Rhea" id="RHEA:23660"/>
        <dbReference type="ChEBI" id="CHEBI:15377"/>
        <dbReference type="ChEBI" id="CHEBI:58928"/>
        <dbReference type="ChEBI" id="CHEBI:77893"/>
        <dbReference type="EC" id="3.5.2.7"/>
    </reaction>
</comment>
<comment type="cofactor">
    <cofactor evidence="1">
        <name>Zn(2+)</name>
        <dbReference type="ChEBI" id="CHEBI:29105"/>
    </cofactor>
    <cofactor evidence="1">
        <name>Fe(3+)</name>
        <dbReference type="ChEBI" id="CHEBI:29034"/>
    </cofactor>
    <text evidence="1">Binds 1 zinc or iron ion per subunit.</text>
</comment>
<comment type="pathway">
    <text evidence="1">Amino-acid degradation; L-histidine degradation into L-glutamate; N-formimidoyl-L-glutamate from L-histidine: step 3/3.</text>
</comment>
<comment type="subcellular location">
    <subcellularLocation>
        <location evidence="1">Cytoplasm</location>
    </subcellularLocation>
</comment>
<comment type="similarity">
    <text evidence="1">Belongs to the metallo-dependent hydrolases superfamily. HutI family.</text>
</comment>
<sequence>MNDLIINHIAELILPKSTDKPLKGKELDELNVVKNGTVVIKDGKIVYAGQHTDDYDATETIDASGKVVSPALVDAHTHLTFGGSREHEMSLKRQGKSYLEILEMGGGILSTVNATRETSEDDLFKKAEHDLLTMIKHGVLAVESKSGYGLDRENELKQLKVSNRLAEKYDLDMKHTFLGPHAVPKEASSNEAFLEEMIALLPEVKQYADFADIFCETGVFTIEQSQHYMQKAKEAGFKVKIHADEIDPLGGLELAIDEQAISADHLVASSDKGKEKLRNSDTVAVLLPATTFYLGKEDYADARGMLDNNGAIALATDYNPGSSVTNNLQLVMAIAALKLKLSPSEVWNAVTVNAAKAIDINAGTINTGDKANLVIWDAPNHEYIPYHFGINHAEKVIKDGKVIVDNTLSFKA</sequence>
<dbReference type="EC" id="3.5.2.7" evidence="1"/>
<dbReference type="EMBL" id="CP000703">
    <property type="protein sequence ID" value="ABQ50135.1"/>
    <property type="molecule type" value="Genomic_DNA"/>
</dbReference>
<dbReference type="RefSeq" id="WP_000998753.1">
    <property type="nucleotide sequence ID" value="NC_009487.1"/>
</dbReference>
<dbReference type="SMR" id="A5IVB2"/>
<dbReference type="KEGG" id="saj:SaurJH9_2355"/>
<dbReference type="HOGENOM" id="CLU_041647_0_1_9"/>
<dbReference type="UniPathway" id="UPA00379">
    <property type="reaction ID" value="UER00551"/>
</dbReference>
<dbReference type="GO" id="GO:0005737">
    <property type="term" value="C:cytoplasm"/>
    <property type="evidence" value="ECO:0007669"/>
    <property type="project" value="UniProtKB-SubCell"/>
</dbReference>
<dbReference type="GO" id="GO:0050480">
    <property type="term" value="F:imidazolonepropionase activity"/>
    <property type="evidence" value="ECO:0007669"/>
    <property type="project" value="UniProtKB-UniRule"/>
</dbReference>
<dbReference type="GO" id="GO:0005506">
    <property type="term" value="F:iron ion binding"/>
    <property type="evidence" value="ECO:0007669"/>
    <property type="project" value="UniProtKB-UniRule"/>
</dbReference>
<dbReference type="GO" id="GO:0008270">
    <property type="term" value="F:zinc ion binding"/>
    <property type="evidence" value="ECO:0007669"/>
    <property type="project" value="UniProtKB-UniRule"/>
</dbReference>
<dbReference type="GO" id="GO:0019556">
    <property type="term" value="P:L-histidine catabolic process to glutamate and formamide"/>
    <property type="evidence" value="ECO:0007669"/>
    <property type="project" value="UniProtKB-UniPathway"/>
</dbReference>
<dbReference type="GO" id="GO:0019557">
    <property type="term" value="P:L-histidine catabolic process to glutamate and formate"/>
    <property type="evidence" value="ECO:0007669"/>
    <property type="project" value="UniProtKB-UniPathway"/>
</dbReference>
<dbReference type="CDD" id="cd01296">
    <property type="entry name" value="Imidazolone-5PH"/>
    <property type="match status" value="1"/>
</dbReference>
<dbReference type="FunFam" id="3.20.20.140:FF:000007">
    <property type="entry name" value="Imidazolonepropionase"/>
    <property type="match status" value="1"/>
</dbReference>
<dbReference type="Gene3D" id="3.20.20.140">
    <property type="entry name" value="Metal-dependent hydrolases"/>
    <property type="match status" value="1"/>
</dbReference>
<dbReference type="Gene3D" id="2.30.40.10">
    <property type="entry name" value="Urease, subunit C, domain 1"/>
    <property type="match status" value="1"/>
</dbReference>
<dbReference type="HAMAP" id="MF_00372">
    <property type="entry name" value="HutI"/>
    <property type="match status" value="1"/>
</dbReference>
<dbReference type="InterPro" id="IPR006680">
    <property type="entry name" value="Amidohydro-rel"/>
</dbReference>
<dbReference type="InterPro" id="IPR005920">
    <property type="entry name" value="HutI"/>
</dbReference>
<dbReference type="InterPro" id="IPR011059">
    <property type="entry name" value="Metal-dep_hydrolase_composite"/>
</dbReference>
<dbReference type="InterPro" id="IPR032466">
    <property type="entry name" value="Metal_Hydrolase"/>
</dbReference>
<dbReference type="NCBIfam" id="TIGR01224">
    <property type="entry name" value="hutI"/>
    <property type="match status" value="1"/>
</dbReference>
<dbReference type="PANTHER" id="PTHR42752">
    <property type="entry name" value="IMIDAZOLONEPROPIONASE"/>
    <property type="match status" value="1"/>
</dbReference>
<dbReference type="PANTHER" id="PTHR42752:SF1">
    <property type="entry name" value="IMIDAZOLONEPROPIONASE-RELATED"/>
    <property type="match status" value="1"/>
</dbReference>
<dbReference type="Pfam" id="PF01979">
    <property type="entry name" value="Amidohydro_1"/>
    <property type="match status" value="1"/>
</dbReference>
<dbReference type="SUPFAM" id="SSF51338">
    <property type="entry name" value="Composite domain of metallo-dependent hydrolases"/>
    <property type="match status" value="1"/>
</dbReference>
<dbReference type="SUPFAM" id="SSF51556">
    <property type="entry name" value="Metallo-dependent hydrolases"/>
    <property type="match status" value="1"/>
</dbReference>
<reference key="1">
    <citation type="submission" date="2007-05" db="EMBL/GenBank/DDBJ databases">
        <title>Complete sequence of chromosome of Staphylococcus aureus subsp. aureus JH9.</title>
        <authorList>
            <consortium name="US DOE Joint Genome Institute"/>
            <person name="Copeland A."/>
            <person name="Lucas S."/>
            <person name="Lapidus A."/>
            <person name="Barry K."/>
            <person name="Detter J.C."/>
            <person name="Glavina del Rio T."/>
            <person name="Hammon N."/>
            <person name="Israni S."/>
            <person name="Pitluck S."/>
            <person name="Chain P."/>
            <person name="Malfatti S."/>
            <person name="Shin M."/>
            <person name="Vergez L."/>
            <person name="Schmutz J."/>
            <person name="Larimer F."/>
            <person name="Land M."/>
            <person name="Hauser L."/>
            <person name="Kyrpides N."/>
            <person name="Kim E."/>
            <person name="Tomasz A."/>
            <person name="Richardson P."/>
        </authorList>
    </citation>
    <scope>NUCLEOTIDE SEQUENCE [LARGE SCALE GENOMIC DNA]</scope>
    <source>
        <strain>JH9</strain>
    </source>
</reference>
<feature type="chain" id="PRO_1000079833" description="Imidazolonepropionase">
    <location>
        <begin position="1"/>
        <end position="412"/>
    </location>
</feature>
<feature type="binding site" evidence="1">
    <location>
        <position position="76"/>
    </location>
    <ligand>
        <name>Fe(3+)</name>
        <dbReference type="ChEBI" id="CHEBI:29034"/>
    </ligand>
</feature>
<feature type="binding site" evidence="1">
    <location>
        <position position="76"/>
    </location>
    <ligand>
        <name>Zn(2+)</name>
        <dbReference type="ChEBI" id="CHEBI:29105"/>
    </ligand>
</feature>
<feature type="binding site" evidence="1">
    <location>
        <position position="78"/>
    </location>
    <ligand>
        <name>Fe(3+)</name>
        <dbReference type="ChEBI" id="CHEBI:29034"/>
    </ligand>
</feature>
<feature type="binding site" evidence="1">
    <location>
        <position position="78"/>
    </location>
    <ligand>
        <name>Zn(2+)</name>
        <dbReference type="ChEBI" id="CHEBI:29105"/>
    </ligand>
</feature>
<feature type="binding site" evidence="1">
    <location>
        <position position="85"/>
    </location>
    <ligand>
        <name>4-imidazolone-5-propanoate</name>
        <dbReference type="ChEBI" id="CHEBI:77893"/>
    </ligand>
</feature>
<feature type="binding site" evidence="1">
    <location>
        <position position="148"/>
    </location>
    <ligand>
        <name>4-imidazolone-5-propanoate</name>
        <dbReference type="ChEBI" id="CHEBI:77893"/>
    </ligand>
</feature>
<feature type="binding site" evidence="1">
    <location>
        <position position="148"/>
    </location>
    <ligand>
        <name>N-formimidoyl-L-glutamate</name>
        <dbReference type="ChEBI" id="CHEBI:58928"/>
    </ligand>
</feature>
<feature type="binding site" evidence="1">
    <location>
        <position position="181"/>
    </location>
    <ligand>
        <name>4-imidazolone-5-propanoate</name>
        <dbReference type="ChEBI" id="CHEBI:77893"/>
    </ligand>
</feature>
<feature type="binding site" evidence="1">
    <location>
        <position position="242"/>
    </location>
    <ligand>
        <name>Fe(3+)</name>
        <dbReference type="ChEBI" id="CHEBI:29034"/>
    </ligand>
</feature>
<feature type="binding site" evidence="1">
    <location>
        <position position="242"/>
    </location>
    <ligand>
        <name>Zn(2+)</name>
        <dbReference type="ChEBI" id="CHEBI:29105"/>
    </ligand>
</feature>
<feature type="binding site" evidence="1">
    <location>
        <position position="245"/>
    </location>
    <ligand>
        <name>4-imidazolone-5-propanoate</name>
        <dbReference type="ChEBI" id="CHEBI:77893"/>
    </ligand>
</feature>
<feature type="binding site" evidence="1">
    <location>
        <position position="317"/>
    </location>
    <ligand>
        <name>Fe(3+)</name>
        <dbReference type="ChEBI" id="CHEBI:29034"/>
    </ligand>
</feature>
<feature type="binding site" evidence="1">
    <location>
        <position position="317"/>
    </location>
    <ligand>
        <name>Zn(2+)</name>
        <dbReference type="ChEBI" id="CHEBI:29105"/>
    </ligand>
</feature>
<feature type="binding site" evidence="1">
    <location>
        <position position="319"/>
    </location>
    <ligand>
        <name>N-formimidoyl-L-glutamate</name>
        <dbReference type="ChEBI" id="CHEBI:58928"/>
    </ligand>
</feature>
<feature type="binding site" evidence="1">
    <location>
        <position position="321"/>
    </location>
    <ligand>
        <name>N-formimidoyl-L-glutamate</name>
        <dbReference type="ChEBI" id="CHEBI:58928"/>
    </ligand>
</feature>
<feature type="binding site" evidence="1">
    <location>
        <position position="322"/>
    </location>
    <ligand>
        <name>4-imidazolone-5-propanoate</name>
        <dbReference type="ChEBI" id="CHEBI:77893"/>
    </ligand>
</feature>
<organism>
    <name type="scientific">Staphylococcus aureus (strain JH9)</name>
    <dbReference type="NCBI Taxonomy" id="359786"/>
    <lineage>
        <taxon>Bacteria</taxon>
        <taxon>Bacillati</taxon>
        <taxon>Bacillota</taxon>
        <taxon>Bacilli</taxon>
        <taxon>Bacillales</taxon>
        <taxon>Staphylococcaceae</taxon>
        <taxon>Staphylococcus</taxon>
    </lineage>
</organism>
<gene>
    <name evidence="1" type="primary">hutI</name>
    <name type="ordered locus">SaurJH9_2355</name>
</gene>
<name>HUTI_STAA9</name>
<keyword id="KW-0963">Cytoplasm</keyword>
<keyword id="KW-0369">Histidine metabolism</keyword>
<keyword id="KW-0378">Hydrolase</keyword>
<keyword id="KW-0408">Iron</keyword>
<keyword id="KW-0479">Metal-binding</keyword>
<keyword id="KW-0862">Zinc</keyword>
<accession>A5IVB2</accession>
<evidence type="ECO:0000255" key="1">
    <source>
        <dbReference type="HAMAP-Rule" id="MF_00372"/>
    </source>
</evidence>
<proteinExistence type="inferred from homology"/>
<protein>
    <recommendedName>
        <fullName evidence="1">Imidazolonepropionase</fullName>
        <ecNumber evidence="1">3.5.2.7</ecNumber>
    </recommendedName>
    <alternativeName>
        <fullName evidence="1">Imidazolone-5-propionate hydrolase</fullName>
    </alternativeName>
</protein>